<proteinExistence type="inferred from homology"/>
<keyword id="KW-0687">Ribonucleoprotein</keyword>
<keyword id="KW-0689">Ribosomal protein</keyword>
<keyword id="KW-0694">RNA-binding</keyword>
<keyword id="KW-0699">rRNA-binding</keyword>
<protein>
    <recommendedName>
        <fullName evidence="1">Large ribosomal subunit protein uL24</fullName>
    </recommendedName>
    <alternativeName>
        <fullName evidence="3">50S ribosomal protein L24</fullName>
    </alternativeName>
</protein>
<organism>
    <name type="scientific">Exiguobacterium sp. (strain ATCC BAA-1283 / AT1b)</name>
    <dbReference type="NCBI Taxonomy" id="360911"/>
    <lineage>
        <taxon>Bacteria</taxon>
        <taxon>Bacillati</taxon>
        <taxon>Bacillota</taxon>
        <taxon>Bacilli</taxon>
        <taxon>Bacillales</taxon>
        <taxon>Bacillales Family XII. Incertae Sedis</taxon>
        <taxon>Exiguobacterium</taxon>
    </lineage>
</organism>
<sequence length="102" mass="10921">MHVKKGDTVQVMSGKDKGKQGVILKAMPSKNRVVVEGVNVMKKHAKPSQANPQGGILEIEAPIHVSNVMPLDPKTGKPTRVGFKVVDGKKVRVAKSGESLDK</sequence>
<accession>C4KZN5</accession>
<feature type="chain" id="PRO_1000214544" description="Large ribosomal subunit protein uL24">
    <location>
        <begin position="1"/>
        <end position="102"/>
    </location>
</feature>
<feature type="region of interest" description="Disordered" evidence="2">
    <location>
        <begin position="1"/>
        <end position="22"/>
    </location>
</feature>
<comment type="function">
    <text evidence="1">One of two assembly initiator proteins, it binds directly to the 5'-end of the 23S rRNA, where it nucleates assembly of the 50S subunit.</text>
</comment>
<comment type="function">
    <text evidence="1">One of the proteins that surrounds the polypeptide exit tunnel on the outside of the subunit.</text>
</comment>
<comment type="subunit">
    <text evidence="1">Part of the 50S ribosomal subunit.</text>
</comment>
<comment type="similarity">
    <text evidence="1">Belongs to the universal ribosomal protein uL24 family.</text>
</comment>
<reference key="1">
    <citation type="journal article" date="2011" name="J. Bacteriol.">
        <title>Complete genome sequence of the Thermophilic Bacterium Exiguobacterium sp. AT1b.</title>
        <authorList>
            <person name="Vishnivetskaya T.A."/>
            <person name="Lucas S."/>
            <person name="Copeland A."/>
            <person name="Lapidus A."/>
            <person name="Glavina del Rio T."/>
            <person name="Dalin E."/>
            <person name="Tice H."/>
            <person name="Bruce D.C."/>
            <person name="Goodwin L.A."/>
            <person name="Pitluck S."/>
            <person name="Saunders E."/>
            <person name="Brettin T."/>
            <person name="Detter C."/>
            <person name="Han C."/>
            <person name="Larimer F."/>
            <person name="Land M.L."/>
            <person name="Hauser L.J."/>
            <person name="Kyrpides N.C."/>
            <person name="Ovchinnikova G."/>
            <person name="Kathariou S."/>
            <person name="Ramaley R.F."/>
            <person name="Rodrigues D.F."/>
            <person name="Hendrix C."/>
            <person name="Richardson P."/>
            <person name="Tiedje J.M."/>
        </authorList>
    </citation>
    <scope>NUCLEOTIDE SEQUENCE [LARGE SCALE GENOMIC DNA]</scope>
    <source>
        <strain>ATCC BAA-1283 / AT1b</strain>
    </source>
</reference>
<name>RL24_EXISA</name>
<evidence type="ECO:0000255" key="1">
    <source>
        <dbReference type="HAMAP-Rule" id="MF_01326"/>
    </source>
</evidence>
<evidence type="ECO:0000256" key="2">
    <source>
        <dbReference type="SAM" id="MobiDB-lite"/>
    </source>
</evidence>
<evidence type="ECO:0000305" key="3"/>
<gene>
    <name evidence="1" type="primary">rplX</name>
    <name type="ordered locus">EAT1b_1622</name>
</gene>
<dbReference type="EMBL" id="CP001615">
    <property type="protein sequence ID" value="ACQ70548.1"/>
    <property type="molecule type" value="Genomic_DNA"/>
</dbReference>
<dbReference type="RefSeq" id="WP_012727666.1">
    <property type="nucleotide sequence ID" value="NC_012673.1"/>
</dbReference>
<dbReference type="SMR" id="C4KZN5"/>
<dbReference type="STRING" id="360911.EAT1b_1622"/>
<dbReference type="GeneID" id="94370754"/>
<dbReference type="KEGG" id="eat:EAT1b_1622"/>
<dbReference type="eggNOG" id="COG0198">
    <property type="taxonomic scope" value="Bacteria"/>
</dbReference>
<dbReference type="HOGENOM" id="CLU_093315_2_0_9"/>
<dbReference type="OrthoDB" id="9807419at2"/>
<dbReference type="Proteomes" id="UP000000716">
    <property type="component" value="Chromosome"/>
</dbReference>
<dbReference type="GO" id="GO:1990904">
    <property type="term" value="C:ribonucleoprotein complex"/>
    <property type="evidence" value="ECO:0007669"/>
    <property type="project" value="UniProtKB-KW"/>
</dbReference>
<dbReference type="GO" id="GO:0005840">
    <property type="term" value="C:ribosome"/>
    <property type="evidence" value="ECO:0007669"/>
    <property type="project" value="UniProtKB-KW"/>
</dbReference>
<dbReference type="GO" id="GO:0019843">
    <property type="term" value="F:rRNA binding"/>
    <property type="evidence" value="ECO:0007669"/>
    <property type="project" value="UniProtKB-UniRule"/>
</dbReference>
<dbReference type="GO" id="GO:0003735">
    <property type="term" value="F:structural constituent of ribosome"/>
    <property type="evidence" value="ECO:0007669"/>
    <property type="project" value="InterPro"/>
</dbReference>
<dbReference type="GO" id="GO:0006412">
    <property type="term" value="P:translation"/>
    <property type="evidence" value="ECO:0007669"/>
    <property type="project" value="UniProtKB-UniRule"/>
</dbReference>
<dbReference type="CDD" id="cd06089">
    <property type="entry name" value="KOW_RPL26"/>
    <property type="match status" value="1"/>
</dbReference>
<dbReference type="FunFam" id="2.30.30.30:FF:000004">
    <property type="entry name" value="50S ribosomal protein L24"/>
    <property type="match status" value="1"/>
</dbReference>
<dbReference type="Gene3D" id="2.30.30.30">
    <property type="match status" value="1"/>
</dbReference>
<dbReference type="HAMAP" id="MF_01326_B">
    <property type="entry name" value="Ribosomal_uL24_B"/>
    <property type="match status" value="1"/>
</dbReference>
<dbReference type="InterPro" id="IPR005824">
    <property type="entry name" value="KOW"/>
</dbReference>
<dbReference type="InterPro" id="IPR014722">
    <property type="entry name" value="Rib_uL2_dom2"/>
</dbReference>
<dbReference type="InterPro" id="IPR003256">
    <property type="entry name" value="Ribosomal_uL24"/>
</dbReference>
<dbReference type="InterPro" id="IPR005825">
    <property type="entry name" value="Ribosomal_uL24_CS"/>
</dbReference>
<dbReference type="InterPro" id="IPR041988">
    <property type="entry name" value="Ribosomal_uL24_KOW"/>
</dbReference>
<dbReference type="InterPro" id="IPR008991">
    <property type="entry name" value="Translation_prot_SH3-like_sf"/>
</dbReference>
<dbReference type="NCBIfam" id="TIGR01079">
    <property type="entry name" value="rplX_bact"/>
    <property type="match status" value="1"/>
</dbReference>
<dbReference type="PANTHER" id="PTHR12903">
    <property type="entry name" value="MITOCHONDRIAL RIBOSOMAL PROTEIN L24"/>
    <property type="match status" value="1"/>
</dbReference>
<dbReference type="Pfam" id="PF00467">
    <property type="entry name" value="KOW"/>
    <property type="match status" value="1"/>
</dbReference>
<dbReference type="Pfam" id="PF17136">
    <property type="entry name" value="ribosomal_L24"/>
    <property type="match status" value="1"/>
</dbReference>
<dbReference type="SMART" id="SM00739">
    <property type="entry name" value="KOW"/>
    <property type="match status" value="1"/>
</dbReference>
<dbReference type="SUPFAM" id="SSF50104">
    <property type="entry name" value="Translation proteins SH3-like domain"/>
    <property type="match status" value="1"/>
</dbReference>
<dbReference type="PROSITE" id="PS01108">
    <property type="entry name" value="RIBOSOMAL_L24"/>
    <property type="match status" value="1"/>
</dbReference>